<evidence type="ECO:0000255" key="1">
    <source>
        <dbReference type="HAMAP-Rule" id="MF_01008"/>
    </source>
</evidence>
<evidence type="ECO:0000255" key="2">
    <source>
        <dbReference type="PROSITE-ProRule" id="PRU01076"/>
    </source>
</evidence>
<protein>
    <recommendedName>
        <fullName>Transcriptional regulator MraZ</fullName>
    </recommendedName>
</protein>
<name>MRAZ_RICRS</name>
<sequence>MNVFLSKYVNGVDKKSRVSVPANYRAVLGKELFNGVIAYPSIRNNCIEVCGISHIEKLRQMIETLDPYSEERDAFETMIFGEAVQLSFDGEGRIILPQSLMKHAGIEEQACFVGKGVIFEIWQPQNFEKYLNAAQKIAHEKRLTLRNAH</sequence>
<accession>A8GSS7</accession>
<keyword id="KW-0963">Cytoplasm</keyword>
<keyword id="KW-0238">DNA-binding</keyword>
<keyword id="KW-0677">Repeat</keyword>
<keyword id="KW-0804">Transcription</keyword>
<keyword id="KW-0805">Transcription regulation</keyword>
<proteinExistence type="inferred from homology"/>
<comment type="subunit">
    <text evidence="1">Forms oligomers.</text>
</comment>
<comment type="subcellular location">
    <subcellularLocation>
        <location evidence="1">Cytoplasm</location>
        <location evidence="1">Nucleoid</location>
    </subcellularLocation>
</comment>
<comment type="similarity">
    <text evidence="1">Belongs to the MraZ family.</text>
</comment>
<organism>
    <name type="scientific">Rickettsia rickettsii (strain Sheila Smith)</name>
    <dbReference type="NCBI Taxonomy" id="392021"/>
    <lineage>
        <taxon>Bacteria</taxon>
        <taxon>Pseudomonadati</taxon>
        <taxon>Pseudomonadota</taxon>
        <taxon>Alphaproteobacteria</taxon>
        <taxon>Rickettsiales</taxon>
        <taxon>Rickettsiaceae</taxon>
        <taxon>Rickettsieae</taxon>
        <taxon>Rickettsia</taxon>
        <taxon>spotted fever group</taxon>
    </lineage>
</organism>
<dbReference type="EMBL" id="CP000848">
    <property type="protein sequence ID" value="ABV76452.1"/>
    <property type="molecule type" value="Genomic_DNA"/>
</dbReference>
<dbReference type="RefSeq" id="WP_012151025.1">
    <property type="nucleotide sequence ID" value="NZ_CP121767.1"/>
</dbReference>
<dbReference type="SMR" id="A8GSS7"/>
<dbReference type="GeneID" id="79937551"/>
<dbReference type="KEGG" id="rri:A1G_04760"/>
<dbReference type="HOGENOM" id="CLU_107907_1_0_5"/>
<dbReference type="Proteomes" id="UP000006832">
    <property type="component" value="Chromosome"/>
</dbReference>
<dbReference type="GO" id="GO:0005737">
    <property type="term" value="C:cytoplasm"/>
    <property type="evidence" value="ECO:0007669"/>
    <property type="project" value="UniProtKB-UniRule"/>
</dbReference>
<dbReference type="GO" id="GO:0009295">
    <property type="term" value="C:nucleoid"/>
    <property type="evidence" value="ECO:0007669"/>
    <property type="project" value="UniProtKB-SubCell"/>
</dbReference>
<dbReference type="GO" id="GO:0003700">
    <property type="term" value="F:DNA-binding transcription factor activity"/>
    <property type="evidence" value="ECO:0007669"/>
    <property type="project" value="UniProtKB-UniRule"/>
</dbReference>
<dbReference type="GO" id="GO:0000976">
    <property type="term" value="F:transcription cis-regulatory region binding"/>
    <property type="evidence" value="ECO:0007669"/>
    <property type="project" value="TreeGrafter"/>
</dbReference>
<dbReference type="GO" id="GO:2000143">
    <property type="term" value="P:negative regulation of DNA-templated transcription initiation"/>
    <property type="evidence" value="ECO:0007669"/>
    <property type="project" value="TreeGrafter"/>
</dbReference>
<dbReference type="CDD" id="cd16321">
    <property type="entry name" value="MraZ_C"/>
    <property type="match status" value="1"/>
</dbReference>
<dbReference type="CDD" id="cd16320">
    <property type="entry name" value="MraZ_N"/>
    <property type="match status" value="1"/>
</dbReference>
<dbReference type="Gene3D" id="3.40.1550.20">
    <property type="entry name" value="Transcriptional regulator MraZ domain"/>
    <property type="match status" value="1"/>
</dbReference>
<dbReference type="HAMAP" id="MF_01008">
    <property type="entry name" value="MraZ"/>
    <property type="match status" value="1"/>
</dbReference>
<dbReference type="InterPro" id="IPR003444">
    <property type="entry name" value="MraZ"/>
</dbReference>
<dbReference type="InterPro" id="IPR035644">
    <property type="entry name" value="MraZ_C"/>
</dbReference>
<dbReference type="InterPro" id="IPR020603">
    <property type="entry name" value="MraZ_dom"/>
</dbReference>
<dbReference type="InterPro" id="IPR035642">
    <property type="entry name" value="MraZ_N"/>
</dbReference>
<dbReference type="InterPro" id="IPR038619">
    <property type="entry name" value="MraZ_sf"/>
</dbReference>
<dbReference type="InterPro" id="IPR007159">
    <property type="entry name" value="SpoVT-AbrB_dom"/>
</dbReference>
<dbReference type="InterPro" id="IPR037914">
    <property type="entry name" value="SpoVT-AbrB_sf"/>
</dbReference>
<dbReference type="NCBIfam" id="NF001475">
    <property type="entry name" value="PRK00326.2-1"/>
    <property type="match status" value="1"/>
</dbReference>
<dbReference type="PANTHER" id="PTHR34701">
    <property type="entry name" value="TRANSCRIPTIONAL REGULATOR MRAZ"/>
    <property type="match status" value="1"/>
</dbReference>
<dbReference type="PANTHER" id="PTHR34701:SF1">
    <property type="entry name" value="TRANSCRIPTIONAL REGULATOR MRAZ"/>
    <property type="match status" value="1"/>
</dbReference>
<dbReference type="Pfam" id="PF02381">
    <property type="entry name" value="MraZ"/>
    <property type="match status" value="1"/>
</dbReference>
<dbReference type="SUPFAM" id="SSF89447">
    <property type="entry name" value="AbrB/MazE/MraZ-like"/>
    <property type="match status" value="1"/>
</dbReference>
<dbReference type="PROSITE" id="PS51740">
    <property type="entry name" value="SPOVT_ABRB"/>
    <property type="match status" value="2"/>
</dbReference>
<gene>
    <name evidence="1" type="primary">mraZ</name>
    <name type="ordered locus">A1G_04760</name>
</gene>
<reference key="1">
    <citation type="submission" date="2007-09" db="EMBL/GenBank/DDBJ databases">
        <title>Complete genome sequence of Rickettsia rickettsii.</title>
        <authorList>
            <person name="Madan A."/>
            <person name="Fahey J."/>
            <person name="Helton E."/>
            <person name="Ketteman M."/>
            <person name="Madan A."/>
            <person name="Rodrigues S."/>
            <person name="Sanchez A."/>
            <person name="Dasch G."/>
            <person name="Eremeeva M."/>
        </authorList>
    </citation>
    <scope>NUCLEOTIDE SEQUENCE [LARGE SCALE GENOMIC DNA]</scope>
    <source>
        <strain>Sheila Smith</strain>
    </source>
</reference>
<feature type="chain" id="PRO_1000062923" description="Transcriptional regulator MraZ">
    <location>
        <begin position="1"/>
        <end position="149"/>
    </location>
</feature>
<feature type="domain" description="SpoVT-AbrB 1" evidence="2">
    <location>
        <begin position="7"/>
        <end position="54"/>
    </location>
</feature>
<feature type="domain" description="SpoVT-AbrB 2" evidence="2">
    <location>
        <begin position="83"/>
        <end position="126"/>
    </location>
</feature>